<evidence type="ECO:0000250" key="1">
    <source>
        <dbReference type="UniProtKB" id="Q9Y091"/>
    </source>
</evidence>
<evidence type="ECO:0000255" key="2"/>
<evidence type="ECO:0000256" key="3">
    <source>
        <dbReference type="SAM" id="MobiDB-lite"/>
    </source>
</evidence>
<evidence type="ECO:0000305" key="4"/>
<dbReference type="EMBL" id="CM000071">
    <property type="protein sequence ID" value="EAL26186.2"/>
    <property type="status" value="ALT_INIT"/>
    <property type="molecule type" value="Genomic_DNA"/>
</dbReference>
<dbReference type="RefSeq" id="XP_001361607.3">
    <property type="nucleotide sequence ID" value="XM_001361570.4"/>
</dbReference>
<dbReference type="SMR" id="Q28XY0"/>
<dbReference type="FunCoup" id="Q28XY0">
    <property type="interactions" value="1588"/>
</dbReference>
<dbReference type="STRING" id="46245.Q28XY0"/>
<dbReference type="EnsemblMetazoa" id="FBtr0280001">
    <property type="protein sequence ID" value="FBpp0278439"/>
    <property type="gene ID" value="FBgn0079504"/>
</dbReference>
<dbReference type="GeneID" id="4805158"/>
<dbReference type="KEGG" id="dpo:4805158"/>
<dbReference type="CTD" id="36527"/>
<dbReference type="eggNOG" id="KOG2991">
    <property type="taxonomic scope" value="Eukaryota"/>
</dbReference>
<dbReference type="InParanoid" id="Q28XY0"/>
<dbReference type="Proteomes" id="UP000001819">
    <property type="component" value="Chromosome 3"/>
</dbReference>
<dbReference type="Bgee" id="FBgn0079504">
    <property type="expression patterns" value="Expressed in insect adult head and 2 other cell types or tissues"/>
</dbReference>
<dbReference type="GO" id="GO:0005634">
    <property type="term" value="C:nucleus"/>
    <property type="evidence" value="ECO:0000250"/>
    <property type="project" value="UniProtKB"/>
</dbReference>
<dbReference type="GO" id="GO:0030154">
    <property type="term" value="P:cell differentiation"/>
    <property type="evidence" value="ECO:0007669"/>
    <property type="project" value="UniProtKB-KW"/>
</dbReference>
<dbReference type="GO" id="GO:0016556">
    <property type="term" value="P:mRNA modification"/>
    <property type="evidence" value="ECO:0007669"/>
    <property type="project" value="InterPro"/>
</dbReference>
<dbReference type="GO" id="GO:0006397">
    <property type="term" value="P:mRNA processing"/>
    <property type="evidence" value="ECO:0007669"/>
    <property type="project" value="UniProtKB-KW"/>
</dbReference>
<dbReference type="GO" id="GO:0000381">
    <property type="term" value="P:regulation of alternative mRNA splicing, via spliceosome"/>
    <property type="evidence" value="ECO:0000250"/>
    <property type="project" value="UniProtKB"/>
</dbReference>
<dbReference type="GO" id="GO:0000375">
    <property type="term" value="P:RNA splicing, via transesterification reactions"/>
    <property type="evidence" value="ECO:0000250"/>
    <property type="project" value="UniProtKB"/>
</dbReference>
<dbReference type="GO" id="GO:0007548">
    <property type="term" value="P:sex differentiation"/>
    <property type="evidence" value="ECO:0007669"/>
    <property type="project" value="UniProtKB-KW"/>
</dbReference>
<dbReference type="InterPro" id="IPR033757">
    <property type="entry name" value="WTAP"/>
</dbReference>
<dbReference type="PANTHER" id="PTHR15217:SF0">
    <property type="entry name" value="PRE-MRNA-SPLICING REGULATOR WTAP"/>
    <property type="match status" value="1"/>
</dbReference>
<dbReference type="PANTHER" id="PTHR15217">
    <property type="entry name" value="WILMS' TUMOR 1-ASSOCIATING PROTEIN"/>
    <property type="match status" value="1"/>
</dbReference>
<dbReference type="Pfam" id="PF17098">
    <property type="entry name" value="Wtap"/>
    <property type="match status" value="1"/>
</dbReference>
<feature type="chain" id="PRO_0000308631" description="Pre-mRNA-splicing regulator female-lethal(2)D">
    <location>
        <begin position="1"/>
        <end position="560"/>
    </location>
</feature>
<feature type="region of interest" description="Disordered" evidence="3">
    <location>
        <begin position="35"/>
        <end position="107"/>
    </location>
</feature>
<feature type="region of interest" description="Disordered" evidence="3">
    <location>
        <begin position="316"/>
        <end position="352"/>
    </location>
</feature>
<feature type="region of interest" description="Disordered" evidence="3">
    <location>
        <begin position="371"/>
        <end position="413"/>
    </location>
</feature>
<feature type="region of interest" description="Disordered" evidence="3">
    <location>
        <begin position="541"/>
        <end position="560"/>
    </location>
</feature>
<feature type="coiled-coil region" evidence="2">
    <location>
        <begin position="87"/>
        <end position="218"/>
    </location>
</feature>
<feature type="coiled-coil region" evidence="2">
    <location>
        <begin position="262"/>
        <end position="324"/>
    </location>
</feature>
<feature type="compositionally biased region" description="Gly residues" evidence="3">
    <location>
        <begin position="42"/>
        <end position="52"/>
    </location>
</feature>
<feature type="compositionally biased region" description="Basic residues" evidence="3">
    <location>
        <begin position="69"/>
        <end position="83"/>
    </location>
</feature>
<feature type="compositionally biased region" description="Low complexity" evidence="3">
    <location>
        <begin position="87"/>
        <end position="107"/>
    </location>
</feature>
<feature type="compositionally biased region" description="Basic and acidic residues" evidence="3">
    <location>
        <begin position="316"/>
        <end position="325"/>
    </location>
</feature>
<feature type="compositionally biased region" description="Polar residues" evidence="3">
    <location>
        <begin position="331"/>
        <end position="349"/>
    </location>
</feature>
<feature type="compositionally biased region" description="Polar residues" evidence="3">
    <location>
        <begin position="375"/>
        <end position="387"/>
    </location>
</feature>
<feature type="compositionally biased region" description="Polar residues" evidence="3">
    <location>
        <begin position="547"/>
        <end position="560"/>
    </location>
</feature>
<keyword id="KW-0175">Coiled coil</keyword>
<keyword id="KW-0217">Developmental protein</keyword>
<keyword id="KW-0221">Differentiation</keyword>
<keyword id="KW-0507">mRNA processing</keyword>
<keyword id="KW-0508">mRNA splicing</keyword>
<keyword id="KW-0539">Nucleus</keyword>
<keyword id="KW-1185">Reference proteome</keyword>
<keyword id="KW-0726">Sexual differentiation</keyword>
<protein>
    <recommendedName>
        <fullName>Pre-mRNA-splicing regulator female-lethal(2)D</fullName>
    </recommendedName>
</protein>
<organism>
    <name type="scientific">Drosophila pseudoobscura pseudoobscura</name>
    <name type="common">Fruit fly</name>
    <dbReference type="NCBI Taxonomy" id="46245"/>
    <lineage>
        <taxon>Eukaryota</taxon>
        <taxon>Metazoa</taxon>
        <taxon>Ecdysozoa</taxon>
        <taxon>Arthropoda</taxon>
        <taxon>Hexapoda</taxon>
        <taxon>Insecta</taxon>
        <taxon>Pterygota</taxon>
        <taxon>Neoptera</taxon>
        <taxon>Endopterygota</taxon>
        <taxon>Diptera</taxon>
        <taxon>Brachycera</taxon>
        <taxon>Muscomorpha</taxon>
        <taxon>Ephydroidea</taxon>
        <taxon>Drosophilidae</taxon>
        <taxon>Drosophila</taxon>
        <taxon>Sophophora</taxon>
    </lineage>
</organism>
<gene>
    <name type="primary">fl(2)d</name>
    <name type="ORF">GA19508</name>
</gene>
<proteinExistence type="inferred from homology"/>
<reference key="1">
    <citation type="journal article" date="2005" name="Genome Res.">
        <title>Comparative genome sequencing of Drosophila pseudoobscura: chromosomal, gene, and cis-element evolution.</title>
        <authorList>
            <person name="Richards S."/>
            <person name="Liu Y."/>
            <person name="Bettencourt B.R."/>
            <person name="Hradecky P."/>
            <person name="Letovsky S."/>
            <person name="Nielsen R."/>
            <person name="Thornton K."/>
            <person name="Hubisz M.J."/>
            <person name="Chen R."/>
            <person name="Meisel R.P."/>
            <person name="Couronne O."/>
            <person name="Hua S."/>
            <person name="Smith M.A."/>
            <person name="Zhang P."/>
            <person name="Liu J."/>
            <person name="Bussemaker H.J."/>
            <person name="van Batenburg M.F."/>
            <person name="Howells S.L."/>
            <person name="Scherer S.E."/>
            <person name="Sodergren E."/>
            <person name="Matthews B.B."/>
            <person name="Crosby M.A."/>
            <person name="Schroeder A.J."/>
            <person name="Ortiz-Barrientos D."/>
            <person name="Rives C.M."/>
            <person name="Metzker M.L."/>
            <person name="Muzny D.M."/>
            <person name="Scott G."/>
            <person name="Steffen D."/>
            <person name="Wheeler D.A."/>
            <person name="Worley K.C."/>
            <person name="Havlak P."/>
            <person name="Durbin K.J."/>
            <person name="Egan A."/>
            <person name="Gill R."/>
            <person name="Hume J."/>
            <person name="Morgan M.B."/>
            <person name="Miner G."/>
            <person name="Hamilton C."/>
            <person name="Huang Y."/>
            <person name="Waldron L."/>
            <person name="Verduzco D."/>
            <person name="Clerc-Blankenburg K.P."/>
            <person name="Dubchak I."/>
            <person name="Noor M.A.F."/>
            <person name="Anderson W."/>
            <person name="White K.P."/>
            <person name="Clark A.G."/>
            <person name="Schaeffer S.W."/>
            <person name="Gelbart W.M."/>
            <person name="Weinstock G.M."/>
            <person name="Gibbs R.A."/>
        </authorList>
    </citation>
    <scope>NUCLEOTIDE SEQUENCE [LARGE SCALE GENOMIC DNA]</scope>
    <source>
        <strain>MV2-25 / Tucson 14011-0121.94</strain>
    </source>
</reference>
<sequence>MSVAAMTMDDQRPLMNSYDKMSTAKYEQNINLISSGASSGISAGGVGGGGVPPSGPASPTPSGSEESHHHPHHPHHSHHHQHHTPNQEQQRQQLQQQEQQHAAVAEAVAAAEQRQRLLEDEIETLKLEQVRMGQICADAQRREKILMRRLANKEQEFQDYVSQIAEYKAQQAPTALALRTALLDPAVNLLFERLKKELKATKTKLEETQNELSAWKFTPDSNTGKRLMAKCRLLYQENEELGKMTSNGRLAKLETELAMQKSFSEEVKKSQSELDDFLQELDEDVEGMQSTILFLQQELKTTRDRIQTLEKDNAQLKQAHTKDDTVAMAPPTTNGTNKMSPPQTPTPSTIGKLEPIDENVALESKAAHPDYLNGDTRSVNNNEQILPSSVPGEHILPDDVNNSNSNGNGNGNAARLARKRNYEEETTTNMVTPTPTPVSYSVEEMTTVREVSTPRILPPKKSKLRGMPTRRSSQLEEELHAAATVAATVATPLILDNSATGMVSEEATAVAQPTLASVESGAVCPESTEAGVVAGPARISTRRRSVRMQQNGAGPLDYST</sequence>
<comment type="function">
    <text evidence="1">Associated component of the WMM complex, a complex that mediates N6-methyladenosine (m6A) methylation of mRNAs, a modification that plays a role in the efficiency of mRNA splicing and is required for sex determination. Required for sex determination and dosage compensation via Sxl alternative splicing: m6A methylation acts as a key regulator of Sxl pre-mRNA and promotes female-specific alternative splicing of Sxl, which determines female physiognomy. M6A methylation is also required for neuronal functions. Required for proper inclusion of regulated exons in Ubx transcripts, leading to isoforms Ia/b and IIa/b.</text>
</comment>
<comment type="subunit">
    <text evidence="1">Component of the WMM complex, a N6-methyltransferase complex composed of a catalytic subcomplex, named MAC, and of an associated subcomplex, named MACOM. The MAC subcomplex is composed of Ime4/Mettl3 and Mettl14. The MACOM subcomplex is composed of fl(2)d, Flacc/Xio, Hakai, vir, and, in some cases of nito. Interacts with vir and msk. Part of a complex containing fl(2)d, Sxl and vir.</text>
</comment>
<comment type="subcellular location">
    <subcellularLocation>
        <location evidence="1">Nucleus</location>
    </subcellularLocation>
</comment>
<comment type="similarity">
    <text evidence="4">Belongs to the fl(2)d family.</text>
</comment>
<comment type="sequence caution" evidence="4">
    <conflict type="erroneous initiation">
        <sequence resource="EMBL-CDS" id="EAL26186"/>
    </conflict>
</comment>
<accession>Q28XY0</accession>
<name>FL2D_DROPS</name>